<dbReference type="EMBL" id="Z35935">
    <property type="protein sequence ID" value="CAA85010.1"/>
    <property type="molecule type" value="Genomic_DNA"/>
</dbReference>
<dbReference type="EMBL" id="AY692862">
    <property type="protein sequence ID" value="AAT92881.1"/>
    <property type="molecule type" value="Genomic_DNA"/>
</dbReference>
<dbReference type="EMBL" id="BK006936">
    <property type="protein sequence ID" value="DAA07185.1"/>
    <property type="molecule type" value="Genomic_DNA"/>
</dbReference>
<dbReference type="PIR" id="S45927">
    <property type="entry name" value="S45927"/>
</dbReference>
<dbReference type="RefSeq" id="NP_009622.1">
    <property type="nucleotide sequence ID" value="NM_001178414.1"/>
</dbReference>
<dbReference type="SMR" id="P38082"/>
<dbReference type="BioGRID" id="32769">
    <property type="interactions" value="63"/>
</dbReference>
<dbReference type="DIP" id="DIP-5146N"/>
<dbReference type="FunCoup" id="P38082">
    <property type="interactions" value="286"/>
</dbReference>
<dbReference type="IntAct" id="P38082">
    <property type="interactions" value="1"/>
</dbReference>
<dbReference type="MINT" id="P38082"/>
<dbReference type="STRING" id="4932.YBR066C"/>
<dbReference type="iPTMnet" id="P38082"/>
<dbReference type="PaxDb" id="4932-YBR066C"/>
<dbReference type="PeptideAtlas" id="P38082"/>
<dbReference type="EnsemblFungi" id="YBR066C_mRNA">
    <property type="protein sequence ID" value="YBR066C"/>
    <property type="gene ID" value="YBR066C"/>
</dbReference>
<dbReference type="GeneID" id="852358"/>
<dbReference type="KEGG" id="sce:YBR066C"/>
<dbReference type="AGR" id="SGD:S000000270"/>
<dbReference type="SGD" id="S000000270">
    <property type="gene designation" value="NRG2"/>
</dbReference>
<dbReference type="VEuPathDB" id="FungiDB:YBR066C"/>
<dbReference type="eggNOG" id="KOG1721">
    <property type="taxonomic scope" value="Eukaryota"/>
</dbReference>
<dbReference type="GeneTree" id="ENSGT00940000176508"/>
<dbReference type="HOGENOM" id="CLU_082791_0_0_1"/>
<dbReference type="InParanoid" id="P38082"/>
<dbReference type="OMA" id="FPINFEC"/>
<dbReference type="OrthoDB" id="6365676at2759"/>
<dbReference type="BioCyc" id="YEAST:G3O-29035-MONOMER"/>
<dbReference type="BioGRID-ORCS" id="852358">
    <property type="hits" value="0 hits in 13 CRISPR screens"/>
</dbReference>
<dbReference type="PRO" id="PR:P38082"/>
<dbReference type="Proteomes" id="UP000002311">
    <property type="component" value="Chromosome II"/>
</dbReference>
<dbReference type="RNAct" id="P38082">
    <property type="molecule type" value="protein"/>
</dbReference>
<dbReference type="GO" id="GO:0000785">
    <property type="term" value="C:chromatin"/>
    <property type="evidence" value="ECO:0000318"/>
    <property type="project" value="GO_Central"/>
</dbReference>
<dbReference type="GO" id="GO:0005634">
    <property type="term" value="C:nucleus"/>
    <property type="evidence" value="ECO:0000314"/>
    <property type="project" value="SGD"/>
</dbReference>
<dbReference type="GO" id="GO:0005667">
    <property type="term" value="C:transcription regulator complex"/>
    <property type="evidence" value="ECO:0000318"/>
    <property type="project" value="GO_Central"/>
</dbReference>
<dbReference type="GO" id="GO:0000981">
    <property type="term" value="F:DNA-binding transcription factor activity, RNA polymerase II-specific"/>
    <property type="evidence" value="ECO:0000318"/>
    <property type="project" value="GO_Central"/>
</dbReference>
<dbReference type="GO" id="GO:0000978">
    <property type="term" value="F:RNA polymerase II cis-regulatory region sequence-specific DNA binding"/>
    <property type="evidence" value="ECO:0000318"/>
    <property type="project" value="GO_Central"/>
</dbReference>
<dbReference type="GO" id="GO:0043565">
    <property type="term" value="F:sequence-specific DNA binding"/>
    <property type="evidence" value="ECO:0000314"/>
    <property type="project" value="SGD"/>
</dbReference>
<dbReference type="GO" id="GO:0008270">
    <property type="term" value="F:zinc ion binding"/>
    <property type="evidence" value="ECO:0007669"/>
    <property type="project" value="UniProtKB-KW"/>
</dbReference>
<dbReference type="GO" id="GO:0043709">
    <property type="term" value="P:cell adhesion involved in single-species biofilm formation"/>
    <property type="evidence" value="ECO:0000316"/>
    <property type="project" value="SGD"/>
</dbReference>
<dbReference type="GO" id="GO:2000218">
    <property type="term" value="P:negative regulation of invasive growth in response to glucose limitation"/>
    <property type="evidence" value="ECO:0000316"/>
    <property type="project" value="SGD"/>
</dbReference>
<dbReference type="GO" id="GO:2000221">
    <property type="term" value="P:negative regulation of pseudohyphal growth"/>
    <property type="evidence" value="ECO:0000316"/>
    <property type="project" value="SGD"/>
</dbReference>
<dbReference type="GO" id="GO:0000122">
    <property type="term" value="P:negative regulation of transcription by RNA polymerase II"/>
    <property type="evidence" value="ECO:0000316"/>
    <property type="project" value="SGD"/>
</dbReference>
<dbReference type="GO" id="GO:0006357">
    <property type="term" value="P:regulation of transcription by RNA polymerase II"/>
    <property type="evidence" value="ECO:0000318"/>
    <property type="project" value="GO_Central"/>
</dbReference>
<dbReference type="FunFam" id="3.30.160.60:FF:001382">
    <property type="entry name" value="Transcriptional repressor"/>
    <property type="match status" value="1"/>
</dbReference>
<dbReference type="Gene3D" id="3.30.160.60">
    <property type="entry name" value="Classic Zinc Finger"/>
    <property type="match status" value="2"/>
</dbReference>
<dbReference type="InterPro" id="IPR036236">
    <property type="entry name" value="Znf_C2H2_sf"/>
</dbReference>
<dbReference type="InterPro" id="IPR013087">
    <property type="entry name" value="Znf_C2H2_type"/>
</dbReference>
<dbReference type="PANTHER" id="PTHR14003">
    <property type="entry name" value="TRANSCRIPTIONAL REPRESSOR PROTEIN YY"/>
    <property type="match status" value="1"/>
</dbReference>
<dbReference type="PANTHER" id="PTHR14003:SF19">
    <property type="entry name" value="YY2 TRANSCRIPTION FACTOR"/>
    <property type="match status" value="1"/>
</dbReference>
<dbReference type="SMART" id="SM00355">
    <property type="entry name" value="ZnF_C2H2"/>
    <property type="match status" value="2"/>
</dbReference>
<dbReference type="SUPFAM" id="SSF57667">
    <property type="entry name" value="beta-beta-alpha zinc fingers"/>
    <property type="match status" value="1"/>
</dbReference>
<dbReference type="PROSITE" id="PS00028">
    <property type="entry name" value="ZINC_FINGER_C2H2_1"/>
    <property type="match status" value="2"/>
</dbReference>
<dbReference type="PROSITE" id="PS50157">
    <property type="entry name" value="ZINC_FINGER_C2H2_2"/>
    <property type="match status" value="2"/>
</dbReference>
<protein>
    <recommendedName>
        <fullName>Probable transcriptional regulator NRG2</fullName>
    </recommendedName>
</protein>
<evidence type="ECO:0000250" key="1"/>
<evidence type="ECO:0000255" key="2">
    <source>
        <dbReference type="PROSITE-ProRule" id="PRU00042"/>
    </source>
</evidence>
<evidence type="ECO:0000269" key="3">
    <source>
    </source>
</evidence>
<evidence type="ECO:0000305" key="4"/>
<keyword id="KW-0238">DNA-binding</keyword>
<keyword id="KW-0479">Metal-binding</keyword>
<keyword id="KW-0539">Nucleus</keyword>
<keyword id="KW-1185">Reference proteome</keyword>
<keyword id="KW-0677">Repeat</keyword>
<keyword id="KW-0678">Repressor</keyword>
<keyword id="KW-0804">Transcription</keyword>
<keyword id="KW-0805">Transcription regulation</keyword>
<keyword id="KW-0862">Zinc</keyword>
<keyword id="KW-0863">Zinc-finger</keyword>
<name>NRG2_YEAST</name>
<sequence length="220" mass="25009">MSIGYKDNLMSTILAKDRKCEFPINFECSPSQITLMPEMFSFNNERKYQTLIPLMKTSHLIDDDLKDKLNKCAFDFFSGKQANRTSDGTISRLTASGKTSPILPLQNINIVKAENTGNGKSDPYSSIKISKPTKTVIKLKSTKTNTAGQRTRHFCKICSTGFTTSGHLSRHNRIHTGEKNHICPHEGCGQRFSRHDNCNQHYRTHANKKKRNWKRREASS</sequence>
<feature type="chain" id="PRO_0000046813" description="Probable transcriptional regulator NRG2">
    <location>
        <begin position="1"/>
        <end position="220"/>
    </location>
</feature>
<feature type="zinc finger region" description="C2H2-type 1" evidence="2">
    <location>
        <begin position="153"/>
        <end position="175"/>
    </location>
</feature>
<feature type="zinc finger region" description="C2H2-type 2" evidence="2">
    <location>
        <begin position="181"/>
        <end position="205"/>
    </location>
</feature>
<comment type="function">
    <text evidence="1">Transcriptional repressor.</text>
</comment>
<comment type="subcellular location">
    <subcellularLocation>
        <location evidence="4">Nucleus</location>
    </subcellularLocation>
</comment>
<comment type="miscellaneous">
    <text evidence="3">Present with 704 molecules/cell in log phase SD medium.</text>
</comment>
<proteinExistence type="evidence at protein level"/>
<gene>
    <name type="primary">NRG2</name>
    <name type="ordered locus">YBR066C</name>
    <name type="ORF">YBR0616</name>
</gene>
<organism>
    <name type="scientific">Saccharomyces cerevisiae (strain ATCC 204508 / S288c)</name>
    <name type="common">Baker's yeast</name>
    <dbReference type="NCBI Taxonomy" id="559292"/>
    <lineage>
        <taxon>Eukaryota</taxon>
        <taxon>Fungi</taxon>
        <taxon>Dikarya</taxon>
        <taxon>Ascomycota</taxon>
        <taxon>Saccharomycotina</taxon>
        <taxon>Saccharomycetes</taxon>
        <taxon>Saccharomycetales</taxon>
        <taxon>Saccharomycetaceae</taxon>
        <taxon>Saccharomyces</taxon>
    </lineage>
</organism>
<accession>P38082</accession>
<accession>D6VQ65</accession>
<reference key="1">
    <citation type="journal article" date="1994" name="EMBO J.">
        <title>Complete DNA sequence of yeast chromosome II.</title>
        <authorList>
            <person name="Feldmann H."/>
            <person name="Aigle M."/>
            <person name="Aljinovic G."/>
            <person name="Andre B."/>
            <person name="Baclet M.C."/>
            <person name="Barthe C."/>
            <person name="Baur A."/>
            <person name="Becam A.-M."/>
            <person name="Biteau N."/>
            <person name="Boles E."/>
            <person name="Brandt T."/>
            <person name="Brendel M."/>
            <person name="Brueckner M."/>
            <person name="Bussereau F."/>
            <person name="Christiansen C."/>
            <person name="Contreras R."/>
            <person name="Crouzet M."/>
            <person name="Cziepluch C."/>
            <person name="Demolis N."/>
            <person name="Delaveau T."/>
            <person name="Doignon F."/>
            <person name="Domdey H."/>
            <person name="Duesterhus S."/>
            <person name="Dubois E."/>
            <person name="Dujon B."/>
            <person name="El Bakkoury M."/>
            <person name="Entian K.-D."/>
            <person name="Feuermann M."/>
            <person name="Fiers W."/>
            <person name="Fobo G.M."/>
            <person name="Fritz C."/>
            <person name="Gassenhuber J."/>
            <person name="Glansdorff N."/>
            <person name="Goffeau A."/>
            <person name="Grivell L.A."/>
            <person name="de Haan M."/>
            <person name="Hein C."/>
            <person name="Herbert C.J."/>
            <person name="Hollenberg C.P."/>
            <person name="Holmstroem K."/>
            <person name="Jacq C."/>
            <person name="Jacquet M."/>
            <person name="Jauniaux J.-C."/>
            <person name="Jonniaux J.-L."/>
            <person name="Kallesoee T."/>
            <person name="Kiesau P."/>
            <person name="Kirchrath L."/>
            <person name="Koetter P."/>
            <person name="Korol S."/>
            <person name="Liebl S."/>
            <person name="Logghe M."/>
            <person name="Lohan A.J.E."/>
            <person name="Louis E.J."/>
            <person name="Li Z.Y."/>
            <person name="Maat M.J."/>
            <person name="Mallet L."/>
            <person name="Mannhaupt G."/>
            <person name="Messenguy F."/>
            <person name="Miosga T."/>
            <person name="Molemans F."/>
            <person name="Mueller S."/>
            <person name="Nasr F."/>
            <person name="Obermaier B."/>
            <person name="Perea J."/>
            <person name="Pierard A."/>
            <person name="Piravandi E."/>
            <person name="Pohl F.M."/>
            <person name="Pohl T.M."/>
            <person name="Potier S."/>
            <person name="Proft M."/>
            <person name="Purnelle B."/>
            <person name="Ramezani Rad M."/>
            <person name="Rieger M."/>
            <person name="Rose M."/>
            <person name="Schaaff-Gerstenschlaeger I."/>
            <person name="Scherens B."/>
            <person name="Schwarzlose C."/>
            <person name="Skala J."/>
            <person name="Slonimski P.P."/>
            <person name="Smits P.H.M."/>
            <person name="Souciet J.-L."/>
            <person name="Steensma H.Y."/>
            <person name="Stucka R."/>
            <person name="Urrestarazu L.A."/>
            <person name="van der Aart Q.J.M."/>
            <person name="Van Dyck L."/>
            <person name="Vassarotti A."/>
            <person name="Vetter I."/>
            <person name="Vierendeels F."/>
            <person name="Vissers S."/>
            <person name="Wagner G."/>
            <person name="de Wergifosse P."/>
            <person name="Wolfe K.H."/>
            <person name="Zagulski M."/>
            <person name="Zimmermann F.K."/>
            <person name="Mewes H.-W."/>
            <person name="Kleine K."/>
        </authorList>
    </citation>
    <scope>NUCLEOTIDE SEQUENCE [LARGE SCALE GENOMIC DNA]</scope>
    <source>
        <strain>ATCC 204508 / S288c</strain>
    </source>
</reference>
<reference key="2">
    <citation type="journal article" date="2014" name="G3 (Bethesda)">
        <title>The reference genome sequence of Saccharomyces cerevisiae: Then and now.</title>
        <authorList>
            <person name="Engel S.R."/>
            <person name="Dietrich F.S."/>
            <person name="Fisk D.G."/>
            <person name="Binkley G."/>
            <person name="Balakrishnan R."/>
            <person name="Costanzo M.C."/>
            <person name="Dwight S.S."/>
            <person name="Hitz B.C."/>
            <person name="Karra K."/>
            <person name="Nash R.S."/>
            <person name="Weng S."/>
            <person name="Wong E.D."/>
            <person name="Lloyd P."/>
            <person name="Skrzypek M.S."/>
            <person name="Miyasato S.R."/>
            <person name="Simison M."/>
            <person name="Cherry J.M."/>
        </authorList>
    </citation>
    <scope>GENOME REANNOTATION</scope>
    <source>
        <strain>ATCC 204508 / S288c</strain>
    </source>
</reference>
<reference key="3">
    <citation type="journal article" date="2007" name="Genome Res.">
        <title>Approaching a complete repository of sequence-verified protein-encoding clones for Saccharomyces cerevisiae.</title>
        <authorList>
            <person name="Hu Y."/>
            <person name="Rolfs A."/>
            <person name="Bhullar B."/>
            <person name="Murthy T.V.S."/>
            <person name="Zhu C."/>
            <person name="Berger M.F."/>
            <person name="Camargo A.A."/>
            <person name="Kelley F."/>
            <person name="McCarron S."/>
            <person name="Jepson D."/>
            <person name="Richardson A."/>
            <person name="Raphael J."/>
            <person name="Moreira D."/>
            <person name="Taycher E."/>
            <person name="Zuo D."/>
            <person name="Mohr S."/>
            <person name="Kane M.F."/>
            <person name="Williamson J."/>
            <person name="Simpson A.J.G."/>
            <person name="Bulyk M.L."/>
            <person name="Harlow E."/>
            <person name="Marsischky G."/>
            <person name="Kolodner R.D."/>
            <person name="LaBaer J."/>
        </authorList>
    </citation>
    <scope>NUCLEOTIDE SEQUENCE [GENOMIC DNA]</scope>
    <source>
        <strain>ATCC 204508 / S288c</strain>
    </source>
</reference>
<reference key="4">
    <citation type="journal article" date="2003" name="Nature">
        <title>Global analysis of protein expression in yeast.</title>
        <authorList>
            <person name="Ghaemmaghami S."/>
            <person name="Huh W.-K."/>
            <person name="Bower K."/>
            <person name="Howson R.W."/>
            <person name="Belle A."/>
            <person name="Dephoure N."/>
            <person name="O'Shea E.K."/>
            <person name="Weissman J.S."/>
        </authorList>
    </citation>
    <scope>LEVEL OF PROTEIN EXPRESSION [LARGE SCALE ANALYSIS]</scope>
</reference>